<feature type="chain" id="PRO_1000185369" description="Phosphoglucosamine mutase">
    <location>
        <begin position="1"/>
        <end position="454"/>
    </location>
</feature>
<feature type="active site" description="Phosphoserine intermediate" evidence="1">
    <location>
        <position position="101"/>
    </location>
</feature>
<feature type="binding site" description="via phosphate group" evidence="1">
    <location>
        <position position="101"/>
    </location>
    <ligand>
        <name>Mg(2+)</name>
        <dbReference type="ChEBI" id="CHEBI:18420"/>
    </ligand>
</feature>
<feature type="binding site" evidence="1">
    <location>
        <position position="243"/>
    </location>
    <ligand>
        <name>Mg(2+)</name>
        <dbReference type="ChEBI" id="CHEBI:18420"/>
    </ligand>
</feature>
<feature type="binding site" evidence="1">
    <location>
        <position position="245"/>
    </location>
    <ligand>
        <name>Mg(2+)</name>
        <dbReference type="ChEBI" id="CHEBI:18420"/>
    </ligand>
</feature>
<feature type="binding site" evidence="1">
    <location>
        <position position="247"/>
    </location>
    <ligand>
        <name>Mg(2+)</name>
        <dbReference type="ChEBI" id="CHEBI:18420"/>
    </ligand>
</feature>
<feature type="modified residue" description="Phosphoserine" evidence="1">
    <location>
        <position position="101"/>
    </location>
</feature>
<keyword id="KW-0413">Isomerase</keyword>
<keyword id="KW-0460">Magnesium</keyword>
<keyword id="KW-0479">Metal-binding</keyword>
<keyword id="KW-0597">Phosphoprotein</keyword>
<keyword id="KW-1185">Reference proteome</keyword>
<name>GLMM_GEODF</name>
<evidence type="ECO:0000255" key="1">
    <source>
        <dbReference type="HAMAP-Rule" id="MF_01554"/>
    </source>
</evidence>
<proteinExistence type="inferred from homology"/>
<comment type="function">
    <text evidence="1">Catalyzes the conversion of glucosamine-6-phosphate to glucosamine-1-phosphate.</text>
</comment>
<comment type="catalytic activity">
    <reaction evidence="1">
        <text>alpha-D-glucosamine 1-phosphate = D-glucosamine 6-phosphate</text>
        <dbReference type="Rhea" id="RHEA:23424"/>
        <dbReference type="ChEBI" id="CHEBI:58516"/>
        <dbReference type="ChEBI" id="CHEBI:58725"/>
        <dbReference type="EC" id="5.4.2.10"/>
    </reaction>
</comment>
<comment type="cofactor">
    <cofactor evidence="1">
        <name>Mg(2+)</name>
        <dbReference type="ChEBI" id="CHEBI:18420"/>
    </cofactor>
    <text evidence="1">Binds 1 Mg(2+) ion per subunit.</text>
</comment>
<comment type="PTM">
    <text evidence="1">Activated by phosphorylation.</text>
</comment>
<comment type="similarity">
    <text evidence="1">Belongs to the phosphohexose mutase family.</text>
</comment>
<gene>
    <name evidence="1" type="primary">glmM</name>
    <name type="ordered locus">Geob_3419</name>
</gene>
<accession>B9M5K3</accession>
<sequence length="454" mass="48685">MKKLFGTDGVRGVANVYPMTTEMAMQIGRAAAHIFRNGKSRHRIVIGKDTRLSGYMIENALVAGICSMGVDVLQVGPLPTPGIANITSSMRADAGVVISASHNPFQDNGIKFFCRDGFKLPDEMELRIEELIFSGDMDSMRPIANEVGKAYRIDDAAGRFVVFLKSTFPKDMDLSGLKIVLDCANGAAYKVAPAVFEELGAEVIAIGVKPNGTNINAGCGSLHPEVISAAVKEHGADLGIALDGDADRVIFVDEFGNEVNGDNIMAICATDMLQKGTLNKQTLVATVMSNMGLDIAVKRAGGRVIKTAVGDRYVVEEMQKGGYNLGGEQSGHMIFLDHNTTGDGILSALQVLAVMQRQGKRLSELAEVMFALPQVLVNVRVAEKRDVMTIPAVAGLIGDIEAKVKDEGRILIRYSGTEPLLRIMLEGQDKYQISGWAKEIADLVEKNIGGSKVG</sequence>
<dbReference type="EC" id="5.4.2.10" evidence="1"/>
<dbReference type="EMBL" id="CP001390">
    <property type="protein sequence ID" value="ACM21762.1"/>
    <property type="molecule type" value="Genomic_DNA"/>
</dbReference>
<dbReference type="RefSeq" id="WP_012648490.1">
    <property type="nucleotide sequence ID" value="NC_011979.1"/>
</dbReference>
<dbReference type="SMR" id="B9M5K3"/>
<dbReference type="STRING" id="316067.Geob_3419"/>
<dbReference type="KEGG" id="geo:Geob_3419"/>
<dbReference type="eggNOG" id="COG1109">
    <property type="taxonomic scope" value="Bacteria"/>
</dbReference>
<dbReference type="HOGENOM" id="CLU_016950_7_0_7"/>
<dbReference type="OrthoDB" id="9806956at2"/>
<dbReference type="Proteomes" id="UP000007721">
    <property type="component" value="Chromosome"/>
</dbReference>
<dbReference type="GO" id="GO:0005829">
    <property type="term" value="C:cytosol"/>
    <property type="evidence" value="ECO:0007669"/>
    <property type="project" value="TreeGrafter"/>
</dbReference>
<dbReference type="GO" id="GO:0000287">
    <property type="term" value="F:magnesium ion binding"/>
    <property type="evidence" value="ECO:0007669"/>
    <property type="project" value="UniProtKB-UniRule"/>
</dbReference>
<dbReference type="GO" id="GO:0008966">
    <property type="term" value="F:phosphoglucosamine mutase activity"/>
    <property type="evidence" value="ECO:0007669"/>
    <property type="project" value="UniProtKB-UniRule"/>
</dbReference>
<dbReference type="GO" id="GO:0004615">
    <property type="term" value="F:phosphomannomutase activity"/>
    <property type="evidence" value="ECO:0007669"/>
    <property type="project" value="TreeGrafter"/>
</dbReference>
<dbReference type="GO" id="GO:0005975">
    <property type="term" value="P:carbohydrate metabolic process"/>
    <property type="evidence" value="ECO:0007669"/>
    <property type="project" value="InterPro"/>
</dbReference>
<dbReference type="GO" id="GO:0009252">
    <property type="term" value="P:peptidoglycan biosynthetic process"/>
    <property type="evidence" value="ECO:0007669"/>
    <property type="project" value="TreeGrafter"/>
</dbReference>
<dbReference type="GO" id="GO:0006048">
    <property type="term" value="P:UDP-N-acetylglucosamine biosynthetic process"/>
    <property type="evidence" value="ECO:0007669"/>
    <property type="project" value="TreeGrafter"/>
</dbReference>
<dbReference type="CDD" id="cd05802">
    <property type="entry name" value="GlmM"/>
    <property type="match status" value="1"/>
</dbReference>
<dbReference type="FunFam" id="3.30.310.50:FF:000001">
    <property type="entry name" value="Phosphoglucosamine mutase"/>
    <property type="match status" value="1"/>
</dbReference>
<dbReference type="FunFam" id="3.40.120.10:FF:000001">
    <property type="entry name" value="Phosphoglucosamine mutase"/>
    <property type="match status" value="1"/>
</dbReference>
<dbReference type="FunFam" id="3.40.120.10:FF:000002">
    <property type="entry name" value="Phosphoglucosamine mutase"/>
    <property type="match status" value="1"/>
</dbReference>
<dbReference type="Gene3D" id="3.40.120.10">
    <property type="entry name" value="Alpha-D-Glucose-1,6-Bisphosphate, subunit A, domain 3"/>
    <property type="match status" value="3"/>
</dbReference>
<dbReference type="Gene3D" id="3.30.310.50">
    <property type="entry name" value="Alpha-D-phosphohexomutase, C-terminal domain"/>
    <property type="match status" value="1"/>
</dbReference>
<dbReference type="HAMAP" id="MF_01554_B">
    <property type="entry name" value="GlmM_B"/>
    <property type="match status" value="1"/>
</dbReference>
<dbReference type="InterPro" id="IPR005844">
    <property type="entry name" value="A-D-PHexomutase_a/b/a-I"/>
</dbReference>
<dbReference type="InterPro" id="IPR016055">
    <property type="entry name" value="A-D-PHexomutase_a/b/a-I/II/III"/>
</dbReference>
<dbReference type="InterPro" id="IPR005845">
    <property type="entry name" value="A-D-PHexomutase_a/b/a-II"/>
</dbReference>
<dbReference type="InterPro" id="IPR005846">
    <property type="entry name" value="A-D-PHexomutase_a/b/a-III"/>
</dbReference>
<dbReference type="InterPro" id="IPR005843">
    <property type="entry name" value="A-D-PHexomutase_C"/>
</dbReference>
<dbReference type="InterPro" id="IPR036900">
    <property type="entry name" value="A-D-PHexomutase_C_sf"/>
</dbReference>
<dbReference type="InterPro" id="IPR016066">
    <property type="entry name" value="A-D-PHexomutase_CS"/>
</dbReference>
<dbReference type="InterPro" id="IPR005841">
    <property type="entry name" value="Alpha-D-phosphohexomutase_SF"/>
</dbReference>
<dbReference type="InterPro" id="IPR006352">
    <property type="entry name" value="GlmM_bact"/>
</dbReference>
<dbReference type="InterPro" id="IPR050060">
    <property type="entry name" value="Phosphoglucosamine_mutase"/>
</dbReference>
<dbReference type="NCBIfam" id="TIGR01455">
    <property type="entry name" value="glmM"/>
    <property type="match status" value="1"/>
</dbReference>
<dbReference type="NCBIfam" id="NF008139">
    <property type="entry name" value="PRK10887.1"/>
    <property type="match status" value="1"/>
</dbReference>
<dbReference type="PANTHER" id="PTHR42946:SF1">
    <property type="entry name" value="PHOSPHOGLUCOMUTASE (ALPHA-D-GLUCOSE-1,6-BISPHOSPHATE-DEPENDENT)"/>
    <property type="match status" value="1"/>
</dbReference>
<dbReference type="PANTHER" id="PTHR42946">
    <property type="entry name" value="PHOSPHOHEXOSE MUTASE"/>
    <property type="match status" value="1"/>
</dbReference>
<dbReference type="Pfam" id="PF02878">
    <property type="entry name" value="PGM_PMM_I"/>
    <property type="match status" value="1"/>
</dbReference>
<dbReference type="Pfam" id="PF02879">
    <property type="entry name" value="PGM_PMM_II"/>
    <property type="match status" value="1"/>
</dbReference>
<dbReference type="Pfam" id="PF02880">
    <property type="entry name" value="PGM_PMM_III"/>
    <property type="match status" value="1"/>
</dbReference>
<dbReference type="Pfam" id="PF00408">
    <property type="entry name" value="PGM_PMM_IV"/>
    <property type="match status" value="1"/>
</dbReference>
<dbReference type="PRINTS" id="PR00509">
    <property type="entry name" value="PGMPMM"/>
</dbReference>
<dbReference type="SUPFAM" id="SSF55957">
    <property type="entry name" value="Phosphoglucomutase, C-terminal domain"/>
    <property type="match status" value="1"/>
</dbReference>
<dbReference type="SUPFAM" id="SSF53738">
    <property type="entry name" value="Phosphoglucomutase, first 3 domains"/>
    <property type="match status" value="3"/>
</dbReference>
<dbReference type="PROSITE" id="PS00710">
    <property type="entry name" value="PGM_PMM"/>
    <property type="match status" value="1"/>
</dbReference>
<organism>
    <name type="scientific">Geotalea daltonii (strain DSM 22248 / JCM 15807 / FRC-32)</name>
    <name type="common">Geobacter daltonii</name>
    <dbReference type="NCBI Taxonomy" id="316067"/>
    <lineage>
        <taxon>Bacteria</taxon>
        <taxon>Pseudomonadati</taxon>
        <taxon>Thermodesulfobacteriota</taxon>
        <taxon>Desulfuromonadia</taxon>
        <taxon>Geobacterales</taxon>
        <taxon>Geobacteraceae</taxon>
        <taxon>Geotalea</taxon>
    </lineage>
</organism>
<reference key="1">
    <citation type="submission" date="2009-01" db="EMBL/GenBank/DDBJ databases">
        <title>Complete sequence of Geobacter sp. FRC-32.</title>
        <authorList>
            <consortium name="US DOE Joint Genome Institute"/>
            <person name="Lucas S."/>
            <person name="Copeland A."/>
            <person name="Lapidus A."/>
            <person name="Glavina del Rio T."/>
            <person name="Dalin E."/>
            <person name="Tice H."/>
            <person name="Bruce D."/>
            <person name="Goodwin L."/>
            <person name="Pitluck S."/>
            <person name="Saunders E."/>
            <person name="Brettin T."/>
            <person name="Detter J.C."/>
            <person name="Han C."/>
            <person name="Larimer F."/>
            <person name="Land M."/>
            <person name="Hauser L."/>
            <person name="Kyrpides N."/>
            <person name="Ovchinnikova G."/>
            <person name="Kostka J."/>
            <person name="Richardson P."/>
        </authorList>
    </citation>
    <scope>NUCLEOTIDE SEQUENCE [LARGE SCALE GENOMIC DNA]</scope>
    <source>
        <strain>DSM 22248 / JCM 15807 / FRC-32</strain>
    </source>
</reference>
<protein>
    <recommendedName>
        <fullName evidence="1">Phosphoglucosamine mutase</fullName>
        <ecNumber evidence="1">5.4.2.10</ecNumber>
    </recommendedName>
</protein>